<accession>Q8ABD1</accession>
<sequence length="150" mass="17518">MKQPSVNIKNKRATFDYELMDTYTAGIVLTGTEIKSIRLGKASLVDTFCYFAKGELWVKNMHIAEYFYGSYNNHTARRDRKLLLNKKELEKIQRGMKDPGFTTVPVRLFINEKGLAKLVVALAKGKKQYDKRESIKEKDDRRDMARMFKR</sequence>
<keyword id="KW-0963">Cytoplasm</keyword>
<keyword id="KW-1185">Reference proteome</keyword>
<keyword id="KW-0694">RNA-binding</keyword>
<feature type="chain" id="PRO_0000102907" description="SsrA-binding protein">
    <location>
        <begin position="1"/>
        <end position="150"/>
    </location>
</feature>
<gene>
    <name evidence="1" type="primary">smpB</name>
    <name type="ordered locus">BT_0179</name>
</gene>
<organism>
    <name type="scientific">Bacteroides thetaiotaomicron (strain ATCC 29148 / DSM 2079 / JCM 5827 / CCUG 10774 / NCTC 10582 / VPI-5482 / E50)</name>
    <dbReference type="NCBI Taxonomy" id="226186"/>
    <lineage>
        <taxon>Bacteria</taxon>
        <taxon>Pseudomonadati</taxon>
        <taxon>Bacteroidota</taxon>
        <taxon>Bacteroidia</taxon>
        <taxon>Bacteroidales</taxon>
        <taxon>Bacteroidaceae</taxon>
        <taxon>Bacteroides</taxon>
    </lineage>
</organism>
<reference key="1">
    <citation type="journal article" date="2003" name="Science">
        <title>A genomic view of the human-Bacteroides thetaiotaomicron symbiosis.</title>
        <authorList>
            <person name="Xu J."/>
            <person name="Bjursell M.K."/>
            <person name="Himrod J."/>
            <person name="Deng S."/>
            <person name="Carmichael L.K."/>
            <person name="Chiang H.C."/>
            <person name="Hooper L.V."/>
            <person name="Gordon J.I."/>
        </authorList>
    </citation>
    <scope>NUCLEOTIDE SEQUENCE [LARGE SCALE GENOMIC DNA]</scope>
    <source>
        <strain>ATCC 29148 / DSM 2079 / JCM 5827 / CCUG 10774 / NCTC 10582 / VPI-5482 / E50</strain>
    </source>
</reference>
<dbReference type="EMBL" id="AE015928">
    <property type="protein sequence ID" value="AAO75286.1"/>
    <property type="molecule type" value="Genomic_DNA"/>
</dbReference>
<dbReference type="RefSeq" id="NP_809092.1">
    <property type="nucleotide sequence ID" value="NC_004663.1"/>
</dbReference>
<dbReference type="RefSeq" id="WP_008760495.1">
    <property type="nucleotide sequence ID" value="NZ_UYXG01000008.1"/>
</dbReference>
<dbReference type="SMR" id="Q8ABD1"/>
<dbReference type="FunCoup" id="Q8ABD1">
    <property type="interactions" value="413"/>
</dbReference>
<dbReference type="STRING" id="226186.BT_0179"/>
<dbReference type="PaxDb" id="226186-BT_0179"/>
<dbReference type="EnsemblBacteria" id="AAO75286">
    <property type="protein sequence ID" value="AAO75286"/>
    <property type="gene ID" value="BT_0179"/>
</dbReference>
<dbReference type="GeneID" id="69589866"/>
<dbReference type="KEGG" id="bth:BT_0179"/>
<dbReference type="PATRIC" id="fig|226186.12.peg.176"/>
<dbReference type="eggNOG" id="COG0691">
    <property type="taxonomic scope" value="Bacteria"/>
</dbReference>
<dbReference type="HOGENOM" id="CLU_108953_0_1_10"/>
<dbReference type="InParanoid" id="Q8ABD1"/>
<dbReference type="OrthoDB" id="9805462at2"/>
<dbReference type="Proteomes" id="UP000001414">
    <property type="component" value="Chromosome"/>
</dbReference>
<dbReference type="GO" id="GO:0005829">
    <property type="term" value="C:cytosol"/>
    <property type="evidence" value="ECO:0000318"/>
    <property type="project" value="GO_Central"/>
</dbReference>
<dbReference type="GO" id="GO:0003723">
    <property type="term" value="F:RNA binding"/>
    <property type="evidence" value="ECO:0000318"/>
    <property type="project" value="GO_Central"/>
</dbReference>
<dbReference type="GO" id="GO:0070929">
    <property type="term" value="P:trans-translation"/>
    <property type="evidence" value="ECO:0007669"/>
    <property type="project" value="UniProtKB-UniRule"/>
</dbReference>
<dbReference type="CDD" id="cd09294">
    <property type="entry name" value="SmpB"/>
    <property type="match status" value="1"/>
</dbReference>
<dbReference type="Gene3D" id="2.40.280.10">
    <property type="match status" value="1"/>
</dbReference>
<dbReference type="HAMAP" id="MF_00023">
    <property type="entry name" value="SmpB"/>
    <property type="match status" value="1"/>
</dbReference>
<dbReference type="InterPro" id="IPR023620">
    <property type="entry name" value="SmpB"/>
</dbReference>
<dbReference type="InterPro" id="IPR000037">
    <property type="entry name" value="SsrA-bd_prot"/>
</dbReference>
<dbReference type="InterPro" id="IPR020081">
    <property type="entry name" value="SsrA-bd_prot_CS"/>
</dbReference>
<dbReference type="NCBIfam" id="NF003843">
    <property type="entry name" value="PRK05422.1"/>
    <property type="match status" value="1"/>
</dbReference>
<dbReference type="NCBIfam" id="TIGR00086">
    <property type="entry name" value="smpB"/>
    <property type="match status" value="1"/>
</dbReference>
<dbReference type="PANTHER" id="PTHR30308:SF2">
    <property type="entry name" value="SSRA-BINDING PROTEIN"/>
    <property type="match status" value="1"/>
</dbReference>
<dbReference type="PANTHER" id="PTHR30308">
    <property type="entry name" value="TMRNA-BINDING COMPONENT OF TRANS-TRANSLATION TAGGING COMPLEX"/>
    <property type="match status" value="1"/>
</dbReference>
<dbReference type="Pfam" id="PF01668">
    <property type="entry name" value="SmpB"/>
    <property type="match status" value="1"/>
</dbReference>
<dbReference type="SUPFAM" id="SSF74982">
    <property type="entry name" value="Small protein B (SmpB)"/>
    <property type="match status" value="1"/>
</dbReference>
<dbReference type="PROSITE" id="PS01317">
    <property type="entry name" value="SSRP"/>
    <property type="match status" value="1"/>
</dbReference>
<protein>
    <recommendedName>
        <fullName evidence="1">SsrA-binding protein</fullName>
    </recommendedName>
    <alternativeName>
        <fullName evidence="1">Small protein B</fullName>
    </alternativeName>
</protein>
<proteinExistence type="inferred from homology"/>
<evidence type="ECO:0000255" key="1">
    <source>
        <dbReference type="HAMAP-Rule" id="MF_00023"/>
    </source>
</evidence>
<comment type="function">
    <text evidence="1">Required for rescue of stalled ribosomes mediated by trans-translation. Binds to transfer-messenger RNA (tmRNA), required for stable association of tmRNA with ribosomes. tmRNA and SmpB together mimic tRNA shape, replacing the anticodon stem-loop with SmpB. tmRNA is encoded by the ssrA gene; the 2 termini fold to resemble tRNA(Ala) and it encodes a 'tag peptide', a short internal open reading frame. During trans-translation Ala-aminoacylated tmRNA acts like a tRNA, entering the A-site of stalled ribosomes, displacing the stalled mRNA. The ribosome then switches to translate the ORF on the tmRNA; the nascent peptide is terminated with the 'tag peptide' encoded by the tmRNA and targeted for degradation. The ribosome is freed to recommence translation, which seems to be the essential function of trans-translation.</text>
</comment>
<comment type="subcellular location">
    <subcellularLocation>
        <location evidence="1">Cytoplasm</location>
    </subcellularLocation>
    <text evidence="1">The tmRNA-SmpB complex associates with stalled 70S ribosomes.</text>
</comment>
<comment type="similarity">
    <text evidence="1">Belongs to the SmpB family.</text>
</comment>
<name>SSRP_BACTN</name>